<protein>
    <recommendedName>
        <fullName evidence="2">Sulfate adenylyltransferase subunit 1</fullName>
        <ecNumber evidence="2">2.7.7.4</ecNumber>
    </recommendedName>
    <alternativeName>
        <fullName evidence="2">ATP-sulfurylase large subunit</fullName>
    </alternativeName>
    <alternativeName>
        <fullName evidence="2">Sulfate adenylate transferase</fullName>
        <shortName evidence="2">SAT</shortName>
    </alternativeName>
</protein>
<sequence length="475" mass="52601">MNTALAQQIANEGGVEAWMIAQQHKSLLRFLTCGSVDDGKSTLIGRLLHDTRQIYEDQLSSLHNDSKRHGTQGEKLDLALLVDGLQAEREQGITIDVAYRYFSTEKRKFIIADTPGHEQYTRNMATGASTCELAILLIDARKGVLDQTRRHSFISTLLGIKHLVVAINKMDLVDYSEETFTRIRKDYLTFAEQLPGNLDIRFVPLSALEGDNVASQSESMPWYSGPTLLEVLETVEIQRVVDAQPMRFPVQYVNRPNLDFRGYAGTLASGRVEVGQRVKVLPSGVESNVARIVTFDGDHEEAFAGEAITLVLTDEIDISRGDLLLAADEALPAVQSASVDVVWMAEQPLSPGQSYDIKIAGKKTRARVDGIRYQVDINNLTQREVENLPLNGIGLVDLTFDEPLVLDRYQQNPVTGGLIFIDRLSNVTVGAGMVHEPVSQATAAPSEFSAFELELNALVRRHFSHWGARDLLGDK</sequence>
<keyword id="KW-0067">ATP-binding</keyword>
<keyword id="KW-0342">GTP-binding</keyword>
<keyword id="KW-0547">Nucleotide-binding</keyword>
<keyword id="KW-0548">Nucleotidyltransferase</keyword>
<keyword id="KW-0808">Transferase</keyword>
<comment type="function">
    <text evidence="2">With CysD forms the ATP sulfurylase (ATPS) that catalyzes the adenylation of sulfate producing adenosine 5'-phosphosulfate (APS) and diphosphate, the first enzymatic step in sulfur assimilation pathway. APS synthesis involves the formation of a high-energy phosphoric-sulfuric acid anhydride bond driven by GTP hydrolysis by CysN coupled to ATP hydrolysis by CysD.</text>
</comment>
<comment type="catalytic activity">
    <reaction evidence="2">
        <text>sulfate + ATP + H(+) = adenosine 5'-phosphosulfate + diphosphate</text>
        <dbReference type="Rhea" id="RHEA:18133"/>
        <dbReference type="ChEBI" id="CHEBI:15378"/>
        <dbReference type="ChEBI" id="CHEBI:16189"/>
        <dbReference type="ChEBI" id="CHEBI:30616"/>
        <dbReference type="ChEBI" id="CHEBI:33019"/>
        <dbReference type="ChEBI" id="CHEBI:58243"/>
        <dbReference type="EC" id="2.7.7.4"/>
    </reaction>
</comment>
<comment type="pathway">
    <text evidence="2">Sulfur metabolism; hydrogen sulfide biosynthesis; sulfite from sulfate: step 1/3.</text>
</comment>
<comment type="subunit">
    <text evidence="2">Heterodimer composed of CysD, the smaller subunit, and CysN.</text>
</comment>
<comment type="similarity">
    <text evidence="2">Belongs to the TRAFAC class translation factor GTPase superfamily. Classic translation factor GTPase family. CysN/NodQ subfamily.</text>
</comment>
<evidence type="ECO:0000250" key="1"/>
<evidence type="ECO:0000255" key="2">
    <source>
        <dbReference type="HAMAP-Rule" id="MF_00062"/>
    </source>
</evidence>
<proteinExistence type="inferred from homology"/>
<reference key="1">
    <citation type="journal article" date="2008" name="DNA Res.">
        <title>Complete genome sequence and comparative analysis of the wild-type commensal Escherichia coli strain SE11 isolated from a healthy adult.</title>
        <authorList>
            <person name="Oshima K."/>
            <person name="Toh H."/>
            <person name="Ogura Y."/>
            <person name="Sasamoto H."/>
            <person name="Morita H."/>
            <person name="Park S.-H."/>
            <person name="Ooka T."/>
            <person name="Iyoda S."/>
            <person name="Taylor T.D."/>
            <person name="Hayashi T."/>
            <person name="Itoh K."/>
            <person name="Hattori M."/>
        </authorList>
    </citation>
    <scope>NUCLEOTIDE SEQUENCE [LARGE SCALE GENOMIC DNA]</scope>
    <source>
        <strain>SE11</strain>
    </source>
</reference>
<organism>
    <name type="scientific">Escherichia coli (strain SE11)</name>
    <dbReference type="NCBI Taxonomy" id="409438"/>
    <lineage>
        <taxon>Bacteria</taxon>
        <taxon>Pseudomonadati</taxon>
        <taxon>Pseudomonadota</taxon>
        <taxon>Gammaproteobacteria</taxon>
        <taxon>Enterobacterales</taxon>
        <taxon>Enterobacteriaceae</taxon>
        <taxon>Escherichia</taxon>
    </lineage>
</organism>
<feature type="chain" id="PRO_1000092140" description="Sulfate adenylyltransferase subunit 1">
    <location>
        <begin position="1"/>
        <end position="475"/>
    </location>
</feature>
<feature type="domain" description="tr-type G">
    <location>
        <begin position="25"/>
        <end position="239"/>
    </location>
</feature>
<feature type="region of interest" description="G1" evidence="1">
    <location>
        <begin position="34"/>
        <end position="41"/>
    </location>
</feature>
<feature type="region of interest" description="G2" evidence="1">
    <location>
        <begin position="92"/>
        <end position="96"/>
    </location>
</feature>
<feature type="region of interest" description="G3" evidence="1">
    <location>
        <begin position="113"/>
        <end position="116"/>
    </location>
</feature>
<feature type="region of interest" description="G4" evidence="1">
    <location>
        <begin position="168"/>
        <end position="171"/>
    </location>
</feature>
<feature type="region of interest" description="G5" evidence="1">
    <location>
        <begin position="206"/>
        <end position="208"/>
    </location>
</feature>
<feature type="binding site" evidence="2">
    <location>
        <begin position="34"/>
        <end position="41"/>
    </location>
    <ligand>
        <name>GTP</name>
        <dbReference type="ChEBI" id="CHEBI:37565"/>
    </ligand>
</feature>
<feature type="binding site" evidence="2">
    <location>
        <begin position="113"/>
        <end position="117"/>
    </location>
    <ligand>
        <name>GTP</name>
        <dbReference type="ChEBI" id="CHEBI:37565"/>
    </ligand>
</feature>
<feature type="binding site" evidence="2">
    <location>
        <begin position="168"/>
        <end position="171"/>
    </location>
    <ligand>
        <name>GTP</name>
        <dbReference type="ChEBI" id="CHEBI:37565"/>
    </ligand>
</feature>
<name>CYSN_ECOSE</name>
<gene>
    <name evidence="2" type="primary">cysN</name>
    <name type="ordered locus">ECSE_3003</name>
</gene>
<accession>B6I6E1</accession>
<dbReference type="EC" id="2.7.7.4" evidence="2"/>
<dbReference type="EMBL" id="AP009240">
    <property type="protein sequence ID" value="BAG78527.1"/>
    <property type="molecule type" value="Genomic_DNA"/>
</dbReference>
<dbReference type="RefSeq" id="WP_001090380.1">
    <property type="nucleotide sequence ID" value="NC_011415.1"/>
</dbReference>
<dbReference type="SMR" id="B6I6E1"/>
<dbReference type="KEGG" id="ecy:ECSE_3003"/>
<dbReference type="HOGENOM" id="CLU_007265_5_2_6"/>
<dbReference type="UniPathway" id="UPA00140">
    <property type="reaction ID" value="UER00204"/>
</dbReference>
<dbReference type="Proteomes" id="UP000008199">
    <property type="component" value="Chromosome"/>
</dbReference>
<dbReference type="GO" id="GO:0005524">
    <property type="term" value="F:ATP binding"/>
    <property type="evidence" value="ECO:0007669"/>
    <property type="project" value="UniProtKB-KW"/>
</dbReference>
<dbReference type="GO" id="GO:0005525">
    <property type="term" value="F:GTP binding"/>
    <property type="evidence" value="ECO:0007669"/>
    <property type="project" value="UniProtKB-UniRule"/>
</dbReference>
<dbReference type="GO" id="GO:0003924">
    <property type="term" value="F:GTPase activity"/>
    <property type="evidence" value="ECO:0007669"/>
    <property type="project" value="InterPro"/>
</dbReference>
<dbReference type="GO" id="GO:0004781">
    <property type="term" value="F:sulfate adenylyltransferase (ATP) activity"/>
    <property type="evidence" value="ECO:0007669"/>
    <property type="project" value="UniProtKB-UniRule"/>
</dbReference>
<dbReference type="GO" id="GO:0070814">
    <property type="term" value="P:hydrogen sulfide biosynthetic process"/>
    <property type="evidence" value="ECO:0007669"/>
    <property type="project" value="UniProtKB-UniRule"/>
</dbReference>
<dbReference type="GO" id="GO:0000103">
    <property type="term" value="P:sulfate assimilation"/>
    <property type="evidence" value="ECO:0007669"/>
    <property type="project" value="UniProtKB-UniRule"/>
</dbReference>
<dbReference type="CDD" id="cd04166">
    <property type="entry name" value="CysN_ATPS"/>
    <property type="match status" value="1"/>
</dbReference>
<dbReference type="CDD" id="cd03695">
    <property type="entry name" value="CysN_NodQ_II"/>
    <property type="match status" value="1"/>
</dbReference>
<dbReference type="CDD" id="cd04095">
    <property type="entry name" value="CysN_NoDQ_III"/>
    <property type="match status" value="1"/>
</dbReference>
<dbReference type="FunFam" id="2.40.30.10:FF:000027">
    <property type="entry name" value="Sulfate adenylyltransferase subunit 1"/>
    <property type="match status" value="1"/>
</dbReference>
<dbReference type="FunFam" id="2.40.30.10:FF:000031">
    <property type="entry name" value="Sulfate adenylyltransferase subunit 1"/>
    <property type="match status" value="1"/>
</dbReference>
<dbReference type="FunFam" id="3.40.50.300:FF:000119">
    <property type="entry name" value="Sulfate adenylyltransferase subunit 1"/>
    <property type="match status" value="1"/>
</dbReference>
<dbReference type="Gene3D" id="3.40.50.300">
    <property type="entry name" value="P-loop containing nucleotide triphosphate hydrolases"/>
    <property type="match status" value="1"/>
</dbReference>
<dbReference type="Gene3D" id="2.40.30.10">
    <property type="entry name" value="Translation factors"/>
    <property type="match status" value="2"/>
</dbReference>
<dbReference type="HAMAP" id="MF_00062">
    <property type="entry name" value="Sulf_adenylyltr_sub1"/>
    <property type="match status" value="1"/>
</dbReference>
<dbReference type="InterPro" id="IPR041757">
    <property type="entry name" value="CysN_GTP-bd"/>
</dbReference>
<dbReference type="InterPro" id="IPR044138">
    <property type="entry name" value="CysN_II"/>
</dbReference>
<dbReference type="InterPro" id="IPR044139">
    <property type="entry name" value="CysN_NoDQ_III"/>
</dbReference>
<dbReference type="InterPro" id="IPR031157">
    <property type="entry name" value="G_TR_CS"/>
</dbReference>
<dbReference type="InterPro" id="IPR054696">
    <property type="entry name" value="GTP-eEF1A_C"/>
</dbReference>
<dbReference type="InterPro" id="IPR027417">
    <property type="entry name" value="P-loop_NTPase"/>
</dbReference>
<dbReference type="InterPro" id="IPR005225">
    <property type="entry name" value="Small_GTP-bd"/>
</dbReference>
<dbReference type="InterPro" id="IPR011779">
    <property type="entry name" value="SO4_adenylTrfase_lsu"/>
</dbReference>
<dbReference type="InterPro" id="IPR000795">
    <property type="entry name" value="T_Tr_GTP-bd_dom"/>
</dbReference>
<dbReference type="InterPro" id="IPR050100">
    <property type="entry name" value="TRAFAC_GTPase_members"/>
</dbReference>
<dbReference type="InterPro" id="IPR009000">
    <property type="entry name" value="Transl_B-barrel_sf"/>
</dbReference>
<dbReference type="InterPro" id="IPR009001">
    <property type="entry name" value="Transl_elong_EF1A/Init_IF2_C"/>
</dbReference>
<dbReference type="NCBIfam" id="TIGR02034">
    <property type="entry name" value="CysN"/>
    <property type="match status" value="1"/>
</dbReference>
<dbReference type="NCBIfam" id="NF003478">
    <property type="entry name" value="PRK05124.1"/>
    <property type="match status" value="1"/>
</dbReference>
<dbReference type="NCBIfam" id="TIGR00231">
    <property type="entry name" value="small_GTP"/>
    <property type="match status" value="1"/>
</dbReference>
<dbReference type="PANTHER" id="PTHR23115">
    <property type="entry name" value="TRANSLATION FACTOR"/>
    <property type="match status" value="1"/>
</dbReference>
<dbReference type="Pfam" id="PF22594">
    <property type="entry name" value="GTP-eEF1A_C"/>
    <property type="match status" value="1"/>
</dbReference>
<dbReference type="Pfam" id="PF00009">
    <property type="entry name" value="GTP_EFTU"/>
    <property type="match status" value="1"/>
</dbReference>
<dbReference type="PRINTS" id="PR00315">
    <property type="entry name" value="ELONGATNFCT"/>
</dbReference>
<dbReference type="SUPFAM" id="SSF50465">
    <property type="entry name" value="EF-Tu/eEF-1alpha/eIF2-gamma C-terminal domain"/>
    <property type="match status" value="1"/>
</dbReference>
<dbReference type="SUPFAM" id="SSF52540">
    <property type="entry name" value="P-loop containing nucleoside triphosphate hydrolases"/>
    <property type="match status" value="1"/>
</dbReference>
<dbReference type="SUPFAM" id="SSF50447">
    <property type="entry name" value="Translation proteins"/>
    <property type="match status" value="1"/>
</dbReference>
<dbReference type="PROSITE" id="PS00301">
    <property type="entry name" value="G_TR_1"/>
    <property type="match status" value="1"/>
</dbReference>
<dbReference type="PROSITE" id="PS51722">
    <property type="entry name" value="G_TR_2"/>
    <property type="match status" value="1"/>
</dbReference>